<gene>
    <name type="primary">MT-CYB</name>
    <name type="synonym">COB</name>
    <name type="synonym">CYTB</name>
    <name type="synonym">MTCYB</name>
</gene>
<sequence>MTNIRKKHPLLKIINDSFIDLPAPSNISSWWNFGSLLGICLVIQILTGLFLAMHYTSDTSTAFSSVTHICRDVNYGWLIRYMHANGASMFFICLFLHVGRGMYYGSYTFMETWNIGVILVFAVMATAXMGXVLPWGQMSFWGATVITNLLSAIPYIGTTLVEWIWGGFSVDKATLTRFFAFHFILPFIITALVVVHLLFLHETGSNNPSGLNSDADKIPFHPYYTIKDILGIILLLMVLMILVLFFPDILGDPDNYTPANPLNTPAHIKPEWYFLFAYAILRSIPNKLGGVVALILSILILAILPLLHTSKQRGLTFRPITQTLFWILVANLFILTWIGGQPVEHPFILIGQLASISYFTIIIILMPAAGMIENNLLKFTH</sequence>
<comment type="function">
    <text evidence="2">Component of the ubiquinol-cytochrome c reductase complex (complex III or cytochrome b-c1 complex) that is part of the mitochondrial respiratory chain. The b-c1 complex mediates electron transfer from ubiquinol to cytochrome c. Contributes to the generation of a proton gradient across the mitochondrial membrane that is then used for ATP synthesis.</text>
</comment>
<comment type="cofactor">
    <cofactor evidence="2">
        <name>heme b</name>
        <dbReference type="ChEBI" id="CHEBI:60344"/>
    </cofactor>
    <text evidence="2">Binds 2 heme b groups non-covalently.</text>
</comment>
<comment type="subunit">
    <text evidence="2">The cytochrome bc1 complex contains 11 subunits: 3 respiratory subunits (MT-CYB, CYC1 and UQCRFS1), 2 core proteins (UQCRC1 and UQCRC2) and 6 low-molecular weight proteins (UQCRH/QCR6, UQCRB/QCR7, UQCRQ/QCR8, UQCR10/QCR9, UQCR11/QCR10 and a cleavage product of UQCRFS1). This cytochrome bc1 complex then forms a dimer.</text>
</comment>
<comment type="subcellular location">
    <subcellularLocation>
        <location evidence="2">Mitochondrion inner membrane</location>
        <topology evidence="2">Multi-pass membrane protein</topology>
    </subcellularLocation>
</comment>
<comment type="miscellaneous">
    <text evidence="1">Heme 1 (or BL or b562) is low-potential and absorbs at about 562 nm, and heme 2 (or BH or b566) is high-potential and absorbs at about 566 nm.</text>
</comment>
<comment type="similarity">
    <text evidence="3 4">Belongs to the cytochrome b family.</text>
</comment>
<comment type="caution">
    <text evidence="2">The full-length protein contains only eight transmembrane helices, not nine as predicted by bioinformatics tools.</text>
</comment>
<keyword id="KW-0249">Electron transport</keyword>
<keyword id="KW-0349">Heme</keyword>
<keyword id="KW-0408">Iron</keyword>
<keyword id="KW-0472">Membrane</keyword>
<keyword id="KW-0479">Metal-binding</keyword>
<keyword id="KW-0496">Mitochondrion</keyword>
<keyword id="KW-0999">Mitochondrion inner membrane</keyword>
<keyword id="KW-0679">Respiratory chain</keyword>
<keyword id="KW-0812">Transmembrane</keyword>
<keyword id="KW-1133">Transmembrane helix</keyword>
<keyword id="KW-0813">Transport</keyword>
<keyword id="KW-0830">Ubiquinone</keyword>
<accession>Q9XNT9</accession>
<organism>
    <name type="scientific">Reithrodontomys sumichrasti</name>
    <name type="common">Sumichrast's harvest mouse</name>
    <dbReference type="NCBI Taxonomy" id="89102"/>
    <lineage>
        <taxon>Eukaryota</taxon>
        <taxon>Metazoa</taxon>
        <taxon>Chordata</taxon>
        <taxon>Craniata</taxon>
        <taxon>Vertebrata</taxon>
        <taxon>Euteleostomi</taxon>
        <taxon>Mammalia</taxon>
        <taxon>Eutheria</taxon>
        <taxon>Euarchontoglires</taxon>
        <taxon>Glires</taxon>
        <taxon>Rodentia</taxon>
        <taxon>Myomorpha</taxon>
        <taxon>Muroidea</taxon>
        <taxon>Cricetidae</taxon>
        <taxon>Neotominae</taxon>
        <taxon>Reithrodontomys</taxon>
    </lineage>
</organism>
<name>CYB_REISU</name>
<evidence type="ECO:0000250" key="1"/>
<evidence type="ECO:0000250" key="2">
    <source>
        <dbReference type="UniProtKB" id="P00157"/>
    </source>
</evidence>
<evidence type="ECO:0000255" key="3">
    <source>
        <dbReference type="PROSITE-ProRule" id="PRU00967"/>
    </source>
</evidence>
<evidence type="ECO:0000255" key="4">
    <source>
        <dbReference type="PROSITE-ProRule" id="PRU00968"/>
    </source>
</evidence>
<reference key="1">
    <citation type="journal article" date="1999" name="J. Mammal. Evol.">
        <title>Phylogenetic relationships and the radiation of Sigmodontine rodents in South America: evidence from cytochrome b.</title>
        <authorList>
            <person name="Smith M.F."/>
            <person name="Patton J.L."/>
        </authorList>
    </citation>
    <scope>NUCLEOTIDE SEQUENCE [GENOMIC DNA]</scope>
</reference>
<dbReference type="EMBL" id="AF108709">
    <property type="protein sequence ID" value="AAD45491.1"/>
    <property type="molecule type" value="Genomic_DNA"/>
</dbReference>
<dbReference type="GO" id="GO:0005743">
    <property type="term" value="C:mitochondrial inner membrane"/>
    <property type="evidence" value="ECO:0007669"/>
    <property type="project" value="UniProtKB-SubCell"/>
</dbReference>
<dbReference type="GO" id="GO:0045275">
    <property type="term" value="C:respiratory chain complex III"/>
    <property type="evidence" value="ECO:0007669"/>
    <property type="project" value="InterPro"/>
</dbReference>
<dbReference type="GO" id="GO:0046872">
    <property type="term" value="F:metal ion binding"/>
    <property type="evidence" value="ECO:0007669"/>
    <property type="project" value="UniProtKB-KW"/>
</dbReference>
<dbReference type="GO" id="GO:0008121">
    <property type="term" value="F:ubiquinol-cytochrome-c reductase activity"/>
    <property type="evidence" value="ECO:0007669"/>
    <property type="project" value="InterPro"/>
</dbReference>
<dbReference type="GO" id="GO:0006122">
    <property type="term" value="P:mitochondrial electron transport, ubiquinol to cytochrome c"/>
    <property type="evidence" value="ECO:0007669"/>
    <property type="project" value="TreeGrafter"/>
</dbReference>
<dbReference type="CDD" id="cd00290">
    <property type="entry name" value="cytochrome_b_C"/>
    <property type="match status" value="1"/>
</dbReference>
<dbReference type="CDD" id="cd00284">
    <property type="entry name" value="Cytochrome_b_N"/>
    <property type="match status" value="1"/>
</dbReference>
<dbReference type="FunFam" id="1.20.810.10:FF:000002">
    <property type="entry name" value="Cytochrome b"/>
    <property type="match status" value="1"/>
</dbReference>
<dbReference type="Gene3D" id="1.20.810.10">
    <property type="entry name" value="Cytochrome Bc1 Complex, Chain C"/>
    <property type="match status" value="1"/>
</dbReference>
<dbReference type="InterPro" id="IPR005798">
    <property type="entry name" value="Cyt_b/b6_C"/>
</dbReference>
<dbReference type="InterPro" id="IPR036150">
    <property type="entry name" value="Cyt_b/b6_C_sf"/>
</dbReference>
<dbReference type="InterPro" id="IPR005797">
    <property type="entry name" value="Cyt_b/b6_N"/>
</dbReference>
<dbReference type="InterPro" id="IPR027387">
    <property type="entry name" value="Cytb/b6-like_sf"/>
</dbReference>
<dbReference type="InterPro" id="IPR030689">
    <property type="entry name" value="Cytochrome_b"/>
</dbReference>
<dbReference type="InterPro" id="IPR048260">
    <property type="entry name" value="Cytochrome_b_C_euk/bac"/>
</dbReference>
<dbReference type="InterPro" id="IPR048259">
    <property type="entry name" value="Cytochrome_b_N_euk/bac"/>
</dbReference>
<dbReference type="InterPro" id="IPR016174">
    <property type="entry name" value="Di-haem_cyt_TM"/>
</dbReference>
<dbReference type="PANTHER" id="PTHR19271">
    <property type="entry name" value="CYTOCHROME B"/>
    <property type="match status" value="1"/>
</dbReference>
<dbReference type="PANTHER" id="PTHR19271:SF16">
    <property type="entry name" value="CYTOCHROME B"/>
    <property type="match status" value="1"/>
</dbReference>
<dbReference type="Pfam" id="PF00032">
    <property type="entry name" value="Cytochrom_B_C"/>
    <property type="match status" value="1"/>
</dbReference>
<dbReference type="Pfam" id="PF00033">
    <property type="entry name" value="Cytochrome_B"/>
    <property type="match status" value="1"/>
</dbReference>
<dbReference type="PIRSF" id="PIRSF038885">
    <property type="entry name" value="COB"/>
    <property type="match status" value="1"/>
</dbReference>
<dbReference type="SUPFAM" id="SSF81648">
    <property type="entry name" value="a domain/subunit of cytochrome bc1 complex (Ubiquinol-cytochrome c reductase)"/>
    <property type="match status" value="1"/>
</dbReference>
<dbReference type="SUPFAM" id="SSF81342">
    <property type="entry name" value="Transmembrane di-heme cytochromes"/>
    <property type="match status" value="1"/>
</dbReference>
<dbReference type="PROSITE" id="PS51003">
    <property type="entry name" value="CYTB_CTER"/>
    <property type="match status" value="1"/>
</dbReference>
<dbReference type="PROSITE" id="PS51002">
    <property type="entry name" value="CYTB_NTER"/>
    <property type="match status" value="1"/>
</dbReference>
<protein>
    <recommendedName>
        <fullName>Cytochrome b</fullName>
    </recommendedName>
    <alternativeName>
        <fullName>Complex III subunit 3</fullName>
    </alternativeName>
    <alternativeName>
        <fullName>Complex III subunit III</fullName>
    </alternativeName>
    <alternativeName>
        <fullName>Cytochrome b-c1 complex subunit 3</fullName>
    </alternativeName>
    <alternativeName>
        <fullName>Ubiquinol-cytochrome-c reductase complex cytochrome b subunit</fullName>
    </alternativeName>
</protein>
<proteinExistence type="inferred from homology"/>
<geneLocation type="mitochondrion"/>
<feature type="chain" id="PRO_0000255126" description="Cytochrome b">
    <location>
        <begin position="1"/>
        <end position="381"/>
    </location>
</feature>
<feature type="transmembrane region" description="Helical" evidence="2">
    <location>
        <begin position="33"/>
        <end position="53"/>
    </location>
</feature>
<feature type="transmembrane region" description="Helical" evidence="2">
    <location>
        <begin position="77"/>
        <end position="98"/>
    </location>
</feature>
<feature type="transmembrane region" description="Helical" evidence="2">
    <location>
        <begin position="113"/>
        <end position="133"/>
    </location>
</feature>
<feature type="transmembrane region" description="Helical" evidence="2">
    <location>
        <begin position="178"/>
        <end position="198"/>
    </location>
</feature>
<feature type="transmembrane region" description="Helical" evidence="2">
    <location>
        <begin position="226"/>
        <end position="246"/>
    </location>
</feature>
<feature type="transmembrane region" description="Helical" evidence="2">
    <location>
        <begin position="288"/>
        <end position="308"/>
    </location>
</feature>
<feature type="transmembrane region" description="Helical" evidence="2">
    <location>
        <begin position="320"/>
        <end position="340"/>
    </location>
</feature>
<feature type="transmembrane region" description="Helical" evidence="2">
    <location>
        <begin position="347"/>
        <end position="367"/>
    </location>
</feature>
<feature type="binding site" description="axial binding residue" evidence="2">
    <location>
        <position position="83"/>
    </location>
    <ligand>
        <name>heme b</name>
        <dbReference type="ChEBI" id="CHEBI:60344"/>
        <label>b562</label>
    </ligand>
    <ligandPart>
        <name>Fe</name>
        <dbReference type="ChEBI" id="CHEBI:18248"/>
    </ligandPart>
</feature>
<feature type="binding site" description="axial binding residue" evidence="2">
    <location>
        <position position="97"/>
    </location>
    <ligand>
        <name>heme b</name>
        <dbReference type="ChEBI" id="CHEBI:60344"/>
        <label>b566</label>
    </ligand>
    <ligandPart>
        <name>Fe</name>
        <dbReference type="ChEBI" id="CHEBI:18248"/>
    </ligandPart>
</feature>
<feature type="binding site" description="axial binding residue" evidence="2">
    <location>
        <position position="182"/>
    </location>
    <ligand>
        <name>heme b</name>
        <dbReference type="ChEBI" id="CHEBI:60344"/>
        <label>b562</label>
    </ligand>
    <ligandPart>
        <name>Fe</name>
        <dbReference type="ChEBI" id="CHEBI:18248"/>
    </ligandPart>
</feature>
<feature type="binding site" description="axial binding residue" evidence="2">
    <location>
        <position position="196"/>
    </location>
    <ligand>
        <name>heme b</name>
        <dbReference type="ChEBI" id="CHEBI:60344"/>
        <label>b566</label>
    </ligand>
    <ligandPart>
        <name>Fe</name>
        <dbReference type="ChEBI" id="CHEBI:18248"/>
    </ligandPart>
</feature>
<feature type="binding site" evidence="2">
    <location>
        <position position="201"/>
    </location>
    <ligand>
        <name>a ubiquinone</name>
        <dbReference type="ChEBI" id="CHEBI:16389"/>
    </ligand>
</feature>